<evidence type="ECO:0000255" key="1">
    <source>
        <dbReference type="HAMAP-Rule" id="MF_01522"/>
    </source>
</evidence>
<organism>
    <name type="scientific">Lactococcus lactis subsp. lactis (strain IL1403)</name>
    <name type="common">Streptococcus lactis</name>
    <dbReference type="NCBI Taxonomy" id="272623"/>
    <lineage>
        <taxon>Bacteria</taxon>
        <taxon>Bacillati</taxon>
        <taxon>Bacillota</taxon>
        <taxon>Bacilli</taxon>
        <taxon>Lactobacillales</taxon>
        <taxon>Streptococcaceae</taxon>
        <taxon>Lactococcus</taxon>
    </lineage>
</organism>
<name>KUP1_LACLA</name>
<feature type="chain" id="PRO_0000209024" description="Probable potassium transport system protein Kup 1">
    <location>
        <begin position="1"/>
        <end position="670"/>
    </location>
</feature>
<feature type="transmembrane region" description="Helical" evidence="1">
    <location>
        <begin position="14"/>
        <end position="34"/>
    </location>
</feature>
<feature type="transmembrane region" description="Helical" evidence="1">
    <location>
        <begin position="58"/>
        <end position="78"/>
    </location>
</feature>
<feature type="transmembrane region" description="Helical" evidence="1">
    <location>
        <begin position="101"/>
        <end position="121"/>
    </location>
</feature>
<feature type="transmembrane region" description="Helical" evidence="1">
    <location>
        <begin position="147"/>
        <end position="167"/>
    </location>
</feature>
<feature type="transmembrane region" description="Helical" evidence="1">
    <location>
        <begin position="175"/>
        <end position="195"/>
    </location>
</feature>
<feature type="transmembrane region" description="Helical" evidence="1">
    <location>
        <begin position="196"/>
        <end position="216"/>
    </location>
</feature>
<feature type="transmembrane region" description="Helical" evidence="1">
    <location>
        <begin position="220"/>
        <end position="240"/>
    </location>
</feature>
<feature type="transmembrane region" description="Helical" evidence="1">
    <location>
        <begin position="252"/>
        <end position="272"/>
    </location>
</feature>
<feature type="transmembrane region" description="Helical" evidence="1">
    <location>
        <begin position="294"/>
        <end position="314"/>
    </location>
</feature>
<feature type="transmembrane region" description="Helical" evidence="1">
    <location>
        <begin position="345"/>
        <end position="365"/>
    </location>
</feature>
<feature type="transmembrane region" description="Helical" evidence="1">
    <location>
        <begin position="374"/>
        <end position="394"/>
    </location>
</feature>
<feature type="transmembrane region" description="Helical" evidence="1">
    <location>
        <begin position="403"/>
        <end position="423"/>
    </location>
</feature>
<feature type="transmembrane region" description="Helical" evidence="1">
    <location>
        <begin position="427"/>
        <end position="447"/>
    </location>
</feature>
<dbReference type="EMBL" id="AE005176">
    <property type="protein sequence ID" value="AAK04721.1"/>
    <property type="molecule type" value="Genomic_DNA"/>
</dbReference>
<dbReference type="PIR" id="G86702">
    <property type="entry name" value="G86702"/>
</dbReference>
<dbReference type="RefSeq" id="NP_266779.1">
    <property type="nucleotide sequence ID" value="NC_002662.1"/>
</dbReference>
<dbReference type="RefSeq" id="WP_010905466.1">
    <property type="nucleotide sequence ID" value="NC_002662.1"/>
</dbReference>
<dbReference type="TCDB" id="2.A.72.1.3">
    <property type="family name" value="the k(+) uptake permease (kup) family"/>
</dbReference>
<dbReference type="PaxDb" id="272623-L9458"/>
<dbReference type="EnsemblBacteria" id="AAK04721">
    <property type="protein sequence ID" value="AAK04721"/>
    <property type="gene ID" value="L9458"/>
</dbReference>
<dbReference type="KEGG" id="lla:L9458"/>
<dbReference type="PATRIC" id="fig|272623.7.peg.665"/>
<dbReference type="eggNOG" id="COG3158">
    <property type="taxonomic scope" value="Bacteria"/>
</dbReference>
<dbReference type="HOGENOM" id="CLU_008142_4_1_9"/>
<dbReference type="OrthoDB" id="9805577at2"/>
<dbReference type="Proteomes" id="UP000002196">
    <property type="component" value="Chromosome"/>
</dbReference>
<dbReference type="GO" id="GO:0005886">
    <property type="term" value="C:plasma membrane"/>
    <property type="evidence" value="ECO:0007669"/>
    <property type="project" value="UniProtKB-SubCell"/>
</dbReference>
<dbReference type="GO" id="GO:0015079">
    <property type="term" value="F:potassium ion transmembrane transporter activity"/>
    <property type="evidence" value="ECO:0007669"/>
    <property type="project" value="UniProtKB-UniRule"/>
</dbReference>
<dbReference type="GO" id="GO:0015293">
    <property type="term" value="F:symporter activity"/>
    <property type="evidence" value="ECO:0007669"/>
    <property type="project" value="UniProtKB-UniRule"/>
</dbReference>
<dbReference type="HAMAP" id="MF_01522">
    <property type="entry name" value="Kup"/>
    <property type="match status" value="1"/>
</dbReference>
<dbReference type="InterPro" id="IPR003855">
    <property type="entry name" value="K+_transporter"/>
</dbReference>
<dbReference type="InterPro" id="IPR053952">
    <property type="entry name" value="K_trans_C"/>
</dbReference>
<dbReference type="InterPro" id="IPR053951">
    <property type="entry name" value="K_trans_N"/>
</dbReference>
<dbReference type="InterPro" id="IPR023051">
    <property type="entry name" value="Kup"/>
</dbReference>
<dbReference type="PANTHER" id="PTHR30540:SF83">
    <property type="entry name" value="K+ POTASSIUM TRANSPORTER"/>
    <property type="match status" value="1"/>
</dbReference>
<dbReference type="PANTHER" id="PTHR30540">
    <property type="entry name" value="OSMOTIC STRESS POTASSIUM TRANSPORTER"/>
    <property type="match status" value="1"/>
</dbReference>
<dbReference type="Pfam" id="PF02705">
    <property type="entry name" value="K_trans"/>
    <property type="match status" value="1"/>
</dbReference>
<dbReference type="Pfam" id="PF22776">
    <property type="entry name" value="K_trans_C"/>
    <property type="match status" value="1"/>
</dbReference>
<sequence length="670" mass="74982">MGYESNRSFNKATGAGFIIAMGIVYGDIGTSPLYTMESIVQGQGGLERISETSIIGALSLIIWTLTLITTVKYVWIALKADNNHEGGIFSLFTLVRKYAKWLIIPAMIGGAALLSDGALTPAVTVTSAIEGLRSIPAFHEAFGQQQLPIVIITLAILAVLFLIQRFGTSIVGKVFGPVMFIWFSFLGITGLINLFGDFSVLQAINPYWAIHLLLSPENKAGIFVLGSVFLATTGAEALYSDLGHVGRGNIHVSWPFVKVCIILSYCGQGAWLLQNRGKSLGDINPFFAVLPQNLIIFSVILATLAAIIASQALISGSFTLVSEAIRLKLLPRLRIFYPGETFGQLYIPAVNLGLWLAASFIVVYFQSSAHMEAAYGLAITVTMLMTTTLLTVYLSHYQKVKKVLVGLFFTVFIFIEGLFFAASAVKFMHGGYVVVIIAAMILFVMAIWHKSDQLFYKYLNSSNLNDYKEQMDKLRKDETYDLYHTNVVYLTAKMDKEWIDRSILYSILDKRPKKAKVYWFVKVNVTDEPYTSEYEVDMLGTDFIVCVNLYLGFHMRQEIPRYLRTIVTNLMESGRLPQQNQTYSITPGRKVGDFRFIILEEKLINARQMPGFERFVLQTKEQIKKITASPARWFGLHFSEVTVETVPLVLSDVKNLEIHERISEENQGES</sequence>
<proteinExistence type="inferred from homology"/>
<reference key="1">
    <citation type="journal article" date="2001" name="Genome Res.">
        <title>The complete genome sequence of the lactic acid bacterium Lactococcus lactis ssp. lactis IL1403.</title>
        <authorList>
            <person name="Bolotin A."/>
            <person name="Wincker P."/>
            <person name="Mauger S."/>
            <person name="Jaillon O."/>
            <person name="Malarme K."/>
            <person name="Weissenbach J."/>
            <person name="Ehrlich S.D."/>
            <person name="Sorokin A."/>
        </authorList>
    </citation>
    <scope>NUCLEOTIDE SEQUENCE [LARGE SCALE GENOMIC DNA]</scope>
    <source>
        <strain>IL1403</strain>
    </source>
</reference>
<keyword id="KW-1003">Cell membrane</keyword>
<keyword id="KW-0406">Ion transport</keyword>
<keyword id="KW-0472">Membrane</keyword>
<keyword id="KW-0630">Potassium</keyword>
<keyword id="KW-0633">Potassium transport</keyword>
<keyword id="KW-1185">Reference proteome</keyword>
<keyword id="KW-0769">Symport</keyword>
<keyword id="KW-0812">Transmembrane</keyword>
<keyword id="KW-1133">Transmembrane helix</keyword>
<keyword id="KW-0813">Transport</keyword>
<comment type="function">
    <text evidence="1">Transport of potassium into the cell. Likely operates as a K(+):H(+) symporter.</text>
</comment>
<comment type="catalytic activity">
    <reaction evidence="1">
        <text>K(+)(in) + H(+)(in) = K(+)(out) + H(+)(out)</text>
        <dbReference type="Rhea" id="RHEA:28490"/>
        <dbReference type="ChEBI" id="CHEBI:15378"/>
        <dbReference type="ChEBI" id="CHEBI:29103"/>
    </reaction>
    <physiologicalReaction direction="right-to-left" evidence="1">
        <dbReference type="Rhea" id="RHEA:28492"/>
    </physiologicalReaction>
</comment>
<comment type="subcellular location">
    <subcellularLocation>
        <location evidence="1">Cell membrane</location>
        <topology evidence="1">Multi-pass membrane protein</topology>
    </subcellularLocation>
</comment>
<comment type="similarity">
    <text evidence="1">Belongs to the HAK/KUP transporter (TC 2.A.72) family.</text>
</comment>
<accession>Q9CHU5</accession>
<protein>
    <recommendedName>
        <fullName evidence="1">Probable potassium transport system protein Kup 1</fullName>
    </recommendedName>
</protein>
<gene>
    <name evidence="1" type="primary">kup1</name>
    <name type="synonym">kupA</name>
    <name type="ordered locus">LL0623</name>
    <name type="ORF">L9458</name>
</gene>